<feature type="chain" id="PRO_1000040562" description="GTP cyclohydrolase-2">
    <location>
        <begin position="1"/>
        <end position="197"/>
    </location>
</feature>
<feature type="active site" description="Proton acceptor" evidence="1">
    <location>
        <position position="126"/>
    </location>
</feature>
<feature type="active site" description="Nucleophile" evidence="1">
    <location>
        <position position="128"/>
    </location>
</feature>
<feature type="binding site" evidence="1">
    <location>
        <begin position="49"/>
        <end position="53"/>
    </location>
    <ligand>
        <name>GTP</name>
        <dbReference type="ChEBI" id="CHEBI:37565"/>
    </ligand>
</feature>
<feature type="binding site" evidence="1">
    <location>
        <position position="54"/>
    </location>
    <ligand>
        <name>Zn(2+)</name>
        <dbReference type="ChEBI" id="CHEBI:29105"/>
        <note>catalytic</note>
    </ligand>
</feature>
<feature type="binding site" evidence="1">
    <location>
        <position position="65"/>
    </location>
    <ligand>
        <name>Zn(2+)</name>
        <dbReference type="ChEBI" id="CHEBI:29105"/>
        <note>catalytic</note>
    </ligand>
</feature>
<feature type="binding site" evidence="1">
    <location>
        <position position="67"/>
    </location>
    <ligand>
        <name>Zn(2+)</name>
        <dbReference type="ChEBI" id="CHEBI:29105"/>
        <note>catalytic</note>
    </ligand>
</feature>
<feature type="binding site" evidence="1">
    <location>
        <position position="70"/>
    </location>
    <ligand>
        <name>GTP</name>
        <dbReference type="ChEBI" id="CHEBI:37565"/>
    </ligand>
</feature>
<feature type="binding site" evidence="1">
    <location>
        <begin position="92"/>
        <end position="94"/>
    </location>
    <ligand>
        <name>GTP</name>
        <dbReference type="ChEBI" id="CHEBI:37565"/>
    </ligand>
</feature>
<feature type="binding site" evidence="1">
    <location>
        <position position="114"/>
    </location>
    <ligand>
        <name>GTP</name>
        <dbReference type="ChEBI" id="CHEBI:37565"/>
    </ligand>
</feature>
<feature type="binding site" evidence="1">
    <location>
        <position position="149"/>
    </location>
    <ligand>
        <name>GTP</name>
        <dbReference type="ChEBI" id="CHEBI:37565"/>
    </ligand>
</feature>
<feature type="binding site" evidence="1">
    <location>
        <position position="154"/>
    </location>
    <ligand>
        <name>GTP</name>
        <dbReference type="ChEBI" id="CHEBI:37565"/>
    </ligand>
</feature>
<dbReference type="EC" id="3.5.4.25" evidence="1"/>
<dbReference type="EMBL" id="CP000783">
    <property type="protein sequence ID" value="ABU76829.1"/>
    <property type="molecule type" value="Genomic_DNA"/>
</dbReference>
<dbReference type="RefSeq" id="WP_004387672.1">
    <property type="nucleotide sequence ID" value="NC_009778.1"/>
</dbReference>
<dbReference type="SMR" id="A7MMF7"/>
<dbReference type="GeneID" id="56730433"/>
<dbReference type="KEGG" id="esa:ESA_01575"/>
<dbReference type="HOGENOM" id="CLU_020273_2_1_6"/>
<dbReference type="UniPathway" id="UPA00275">
    <property type="reaction ID" value="UER00400"/>
</dbReference>
<dbReference type="Proteomes" id="UP000000260">
    <property type="component" value="Chromosome"/>
</dbReference>
<dbReference type="GO" id="GO:0005829">
    <property type="term" value="C:cytosol"/>
    <property type="evidence" value="ECO:0007669"/>
    <property type="project" value="TreeGrafter"/>
</dbReference>
<dbReference type="GO" id="GO:0005525">
    <property type="term" value="F:GTP binding"/>
    <property type="evidence" value="ECO:0007669"/>
    <property type="project" value="UniProtKB-KW"/>
</dbReference>
<dbReference type="GO" id="GO:0003935">
    <property type="term" value="F:GTP cyclohydrolase II activity"/>
    <property type="evidence" value="ECO:0007669"/>
    <property type="project" value="UniProtKB-UniRule"/>
</dbReference>
<dbReference type="GO" id="GO:0008270">
    <property type="term" value="F:zinc ion binding"/>
    <property type="evidence" value="ECO:0007669"/>
    <property type="project" value="UniProtKB-UniRule"/>
</dbReference>
<dbReference type="GO" id="GO:0009231">
    <property type="term" value="P:riboflavin biosynthetic process"/>
    <property type="evidence" value="ECO:0007669"/>
    <property type="project" value="UniProtKB-UniRule"/>
</dbReference>
<dbReference type="CDD" id="cd00641">
    <property type="entry name" value="GTP_cyclohydro2"/>
    <property type="match status" value="1"/>
</dbReference>
<dbReference type="FunFam" id="3.40.50.10990:FF:000002">
    <property type="entry name" value="GTP cyclohydrolase-2"/>
    <property type="match status" value="1"/>
</dbReference>
<dbReference type="Gene3D" id="3.40.50.10990">
    <property type="entry name" value="GTP cyclohydrolase II"/>
    <property type="match status" value="1"/>
</dbReference>
<dbReference type="HAMAP" id="MF_00179">
    <property type="entry name" value="RibA"/>
    <property type="match status" value="1"/>
</dbReference>
<dbReference type="InterPro" id="IPR032677">
    <property type="entry name" value="GTP_cyclohydro_II"/>
</dbReference>
<dbReference type="InterPro" id="IPR000926">
    <property type="entry name" value="RibA"/>
</dbReference>
<dbReference type="InterPro" id="IPR036144">
    <property type="entry name" value="RibA-like_sf"/>
</dbReference>
<dbReference type="NCBIfam" id="NF001591">
    <property type="entry name" value="PRK00393.1"/>
    <property type="match status" value="1"/>
</dbReference>
<dbReference type="NCBIfam" id="TIGR00505">
    <property type="entry name" value="ribA"/>
    <property type="match status" value="1"/>
</dbReference>
<dbReference type="PANTHER" id="PTHR21327:SF18">
    <property type="entry name" value="3,4-DIHYDROXY-2-BUTANONE 4-PHOSPHATE SYNTHASE"/>
    <property type="match status" value="1"/>
</dbReference>
<dbReference type="PANTHER" id="PTHR21327">
    <property type="entry name" value="GTP CYCLOHYDROLASE II-RELATED"/>
    <property type="match status" value="1"/>
</dbReference>
<dbReference type="Pfam" id="PF00925">
    <property type="entry name" value="GTP_cyclohydro2"/>
    <property type="match status" value="1"/>
</dbReference>
<dbReference type="SUPFAM" id="SSF142695">
    <property type="entry name" value="RibA-like"/>
    <property type="match status" value="1"/>
</dbReference>
<comment type="function">
    <text evidence="1">Catalyzes the conversion of GTP to 2,5-diamino-6-ribosylamino-4(3H)-pyrimidinone 5'-phosphate (DARP), formate and pyrophosphate.</text>
</comment>
<comment type="catalytic activity">
    <reaction evidence="1">
        <text>GTP + 4 H2O = 2,5-diamino-6-hydroxy-4-(5-phosphoribosylamino)-pyrimidine + formate + 2 phosphate + 3 H(+)</text>
        <dbReference type="Rhea" id="RHEA:23704"/>
        <dbReference type="ChEBI" id="CHEBI:15377"/>
        <dbReference type="ChEBI" id="CHEBI:15378"/>
        <dbReference type="ChEBI" id="CHEBI:15740"/>
        <dbReference type="ChEBI" id="CHEBI:37565"/>
        <dbReference type="ChEBI" id="CHEBI:43474"/>
        <dbReference type="ChEBI" id="CHEBI:58614"/>
        <dbReference type="EC" id="3.5.4.25"/>
    </reaction>
</comment>
<comment type="cofactor">
    <cofactor evidence="1">
        <name>Zn(2+)</name>
        <dbReference type="ChEBI" id="CHEBI:29105"/>
    </cofactor>
    <text evidence="1">Binds 1 zinc ion per subunit.</text>
</comment>
<comment type="pathway">
    <text evidence="1">Cofactor biosynthesis; riboflavin biosynthesis; 5-amino-6-(D-ribitylamino)uracil from GTP: step 1/4.</text>
</comment>
<comment type="subunit">
    <text evidence="1">Homodimer.</text>
</comment>
<comment type="similarity">
    <text evidence="1">Belongs to the GTP cyclohydrolase II family.</text>
</comment>
<keyword id="KW-0342">GTP-binding</keyword>
<keyword id="KW-0378">Hydrolase</keyword>
<keyword id="KW-0479">Metal-binding</keyword>
<keyword id="KW-0547">Nucleotide-binding</keyword>
<keyword id="KW-1185">Reference proteome</keyword>
<keyword id="KW-0686">Riboflavin biosynthesis</keyword>
<keyword id="KW-0862">Zinc</keyword>
<reference key="1">
    <citation type="journal article" date="2010" name="PLoS ONE">
        <title>Genome sequence of Cronobacter sakazakii BAA-894 and comparative genomic hybridization analysis with other Cronobacter species.</title>
        <authorList>
            <person name="Kucerova E."/>
            <person name="Clifton S.W."/>
            <person name="Xia X.Q."/>
            <person name="Long F."/>
            <person name="Porwollik S."/>
            <person name="Fulton L."/>
            <person name="Fronick C."/>
            <person name="Minx P."/>
            <person name="Kyung K."/>
            <person name="Warren W."/>
            <person name="Fulton R."/>
            <person name="Feng D."/>
            <person name="Wollam A."/>
            <person name="Shah N."/>
            <person name="Bhonagiri V."/>
            <person name="Nash W.E."/>
            <person name="Hallsworth-Pepin K."/>
            <person name="Wilson R.K."/>
            <person name="McClelland M."/>
            <person name="Forsythe S.J."/>
        </authorList>
    </citation>
    <scope>NUCLEOTIDE SEQUENCE [LARGE SCALE GENOMIC DNA]</scope>
    <source>
        <strain>ATCC BAA-894</strain>
    </source>
</reference>
<organism>
    <name type="scientific">Cronobacter sakazakii (strain ATCC BAA-894)</name>
    <name type="common">Enterobacter sakazakii</name>
    <dbReference type="NCBI Taxonomy" id="290339"/>
    <lineage>
        <taxon>Bacteria</taxon>
        <taxon>Pseudomonadati</taxon>
        <taxon>Pseudomonadota</taxon>
        <taxon>Gammaproteobacteria</taxon>
        <taxon>Enterobacterales</taxon>
        <taxon>Enterobacteriaceae</taxon>
        <taxon>Cronobacter</taxon>
    </lineage>
</organism>
<name>RIBA_CROS8</name>
<evidence type="ECO:0000255" key="1">
    <source>
        <dbReference type="HAMAP-Rule" id="MF_00179"/>
    </source>
</evidence>
<sequence length="197" mass="21727">MQLKRVAEAKLPTPWGDFLMVGFEELATGQDHVALVFGDISGTEPVLARVHSECLTGDALFSLRCDCGFQLEAALSHIAEAGRGVLLYHRQEGRNIGLLNKIRAYALQDQGYDTVEANHQLGFAADERDFTLCADMFKLLGVDEVRLLTNNPRKVEILTEAGINIVERVPLIVGRNPKNEHYLDTKAAKMGHLLSGN</sequence>
<accession>A7MMF7</accession>
<protein>
    <recommendedName>
        <fullName evidence="1">GTP cyclohydrolase-2</fullName>
        <ecNumber evidence="1">3.5.4.25</ecNumber>
    </recommendedName>
    <alternativeName>
        <fullName evidence="1">GTP cyclohydrolase II</fullName>
    </alternativeName>
</protein>
<gene>
    <name evidence="1" type="primary">ribA</name>
    <name type="ordered locus">ESA_01575</name>
</gene>
<proteinExistence type="inferred from homology"/>